<reference key="1">
    <citation type="journal article" date="2004" name="J. Bacteriol.">
        <title>Comparative genomics of two Leptospira interrogans serovars reveals novel insights into physiology and pathogenesis.</title>
        <authorList>
            <person name="Nascimento A.L.T.O."/>
            <person name="Ko A.I."/>
            <person name="Martins E.A.L."/>
            <person name="Monteiro-Vitorello C.B."/>
            <person name="Ho P.L."/>
            <person name="Haake D.A."/>
            <person name="Verjovski-Almeida S."/>
            <person name="Hartskeerl R.A."/>
            <person name="Marques M.V."/>
            <person name="Oliveira M.C."/>
            <person name="Menck C.F.M."/>
            <person name="Leite L.C.C."/>
            <person name="Carrer H."/>
            <person name="Coutinho L.L."/>
            <person name="Degrave W.M."/>
            <person name="Dellagostin O.A."/>
            <person name="El-Dorry H."/>
            <person name="Ferro E.S."/>
            <person name="Ferro M.I.T."/>
            <person name="Furlan L.R."/>
            <person name="Gamberini M."/>
            <person name="Giglioti E.A."/>
            <person name="Goes-Neto A."/>
            <person name="Goldman G.H."/>
            <person name="Goldman M.H.S."/>
            <person name="Harakava R."/>
            <person name="Jeronimo S.M.B."/>
            <person name="Junqueira-de-Azevedo I.L.M."/>
            <person name="Kimura E.T."/>
            <person name="Kuramae E.E."/>
            <person name="Lemos E.G.M."/>
            <person name="Lemos M.V.F."/>
            <person name="Marino C.L."/>
            <person name="Nunes L.R."/>
            <person name="de Oliveira R.C."/>
            <person name="Pereira G.G."/>
            <person name="Reis M.S."/>
            <person name="Schriefer A."/>
            <person name="Siqueira W.J."/>
            <person name="Sommer P."/>
            <person name="Tsai S.M."/>
            <person name="Simpson A.J.G."/>
            <person name="Ferro J.A."/>
            <person name="Camargo L.E.A."/>
            <person name="Kitajima J.P."/>
            <person name="Setubal J.C."/>
            <person name="Van Sluys M.A."/>
        </authorList>
    </citation>
    <scope>NUCLEOTIDE SEQUENCE [LARGE SCALE GENOMIC DNA]</scope>
    <source>
        <strain>Fiocruz L1-130</strain>
    </source>
</reference>
<dbReference type="EC" id="5.3.1.23" evidence="1"/>
<dbReference type="EMBL" id="AE016823">
    <property type="protein sequence ID" value="AAS69782.1"/>
    <property type="molecule type" value="Genomic_DNA"/>
</dbReference>
<dbReference type="RefSeq" id="WP_001158185.1">
    <property type="nucleotide sequence ID" value="NC_005823.1"/>
</dbReference>
<dbReference type="SMR" id="Q72T46"/>
<dbReference type="GeneID" id="61144494"/>
<dbReference type="KEGG" id="lic:LIC_11175"/>
<dbReference type="HOGENOM" id="CLU_016218_1_2_12"/>
<dbReference type="UniPathway" id="UPA00904">
    <property type="reaction ID" value="UER00874"/>
</dbReference>
<dbReference type="Proteomes" id="UP000007037">
    <property type="component" value="Chromosome I"/>
</dbReference>
<dbReference type="GO" id="GO:0046523">
    <property type="term" value="F:S-methyl-5-thioribose-1-phosphate isomerase activity"/>
    <property type="evidence" value="ECO:0007669"/>
    <property type="project" value="UniProtKB-UniRule"/>
</dbReference>
<dbReference type="GO" id="GO:0019509">
    <property type="term" value="P:L-methionine salvage from methylthioadenosine"/>
    <property type="evidence" value="ECO:0007669"/>
    <property type="project" value="UniProtKB-UniRule"/>
</dbReference>
<dbReference type="FunFam" id="1.20.120.420:FF:000003">
    <property type="entry name" value="Methylthioribose-1-phosphate isomerase"/>
    <property type="match status" value="1"/>
</dbReference>
<dbReference type="FunFam" id="3.40.50.10470:FF:000006">
    <property type="entry name" value="Methylthioribose-1-phosphate isomerase"/>
    <property type="match status" value="1"/>
</dbReference>
<dbReference type="Gene3D" id="1.20.120.420">
    <property type="entry name" value="translation initiation factor eif-2b, domain 1"/>
    <property type="match status" value="1"/>
</dbReference>
<dbReference type="Gene3D" id="3.40.50.10470">
    <property type="entry name" value="Translation initiation factor eif-2b, domain 2"/>
    <property type="match status" value="1"/>
</dbReference>
<dbReference type="HAMAP" id="MF_01678">
    <property type="entry name" value="Salvage_MtnA"/>
    <property type="match status" value="1"/>
</dbReference>
<dbReference type="InterPro" id="IPR000649">
    <property type="entry name" value="IF-2B-related"/>
</dbReference>
<dbReference type="InterPro" id="IPR005251">
    <property type="entry name" value="IF-M1Pi"/>
</dbReference>
<dbReference type="InterPro" id="IPR042529">
    <property type="entry name" value="IF_2B-like_C"/>
</dbReference>
<dbReference type="InterPro" id="IPR011559">
    <property type="entry name" value="Initiation_fac_2B_a/b/d"/>
</dbReference>
<dbReference type="InterPro" id="IPR027363">
    <property type="entry name" value="M1Pi_N"/>
</dbReference>
<dbReference type="InterPro" id="IPR037171">
    <property type="entry name" value="NagB/RpiA_transferase-like"/>
</dbReference>
<dbReference type="NCBIfam" id="TIGR00524">
    <property type="entry name" value="eIF-2B_rel"/>
    <property type="match status" value="1"/>
</dbReference>
<dbReference type="NCBIfam" id="NF004326">
    <property type="entry name" value="PRK05720.1"/>
    <property type="match status" value="1"/>
</dbReference>
<dbReference type="NCBIfam" id="TIGR00512">
    <property type="entry name" value="salvage_mtnA"/>
    <property type="match status" value="1"/>
</dbReference>
<dbReference type="PANTHER" id="PTHR43475">
    <property type="entry name" value="METHYLTHIORIBOSE-1-PHOSPHATE ISOMERASE"/>
    <property type="match status" value="1"/>
</dbReference>
<dbReference type="PANTHER" id="PTHR43475:SF1">
    <property type="entry name" value="METHYLTHIORIBOSE-1-PHOSPHATE ISOMERASE"/>
    <property type="match status" value="1"/>
</dbReference>
<dbReference type="Pfam" id="PF01008">
    <property type="entry name" value="IF-2B"/>
    <property type="match status" value="1"/>
</dbReference>
<dbReference type="SUPFAM" id="SSF100950">
    <property type="entry name" value="NagB/RpiA/CoA transferase-like"/>
    <property type="match status" value="1"/>
</dbReference>
<sequence>MQESGLKPILWKNKELILLDQRVLPGTTSYITAKTLEDCIFAIREMVVRGAPAIAITGAFGITLYWNSLVSKPSFSELKLKLSELLESRPTAVNLRLAIEEFSSRFPESNYSSFSLEEIQKGAEELALFMLSEDLENNLTLSKYALSLFPKQPSSLNIITHCNTGALATAGHGTALGVIRSLRDAGHSLTVFADETRPYLQGARLTAWELQEEKIQSFLITDNMAGWVMSSRKIDAVIVGADRIASNGDTANKIGTYPLAIVAKHHGVPFYVAATAKSMDFRIPNGSYIPIEMRKEEEITSFGFLKDSDGKPLLKEGVIAPKGMKALNPSFDVTPASLITGIITEKGIVSPVTEENLKKIFQSI</sequence>
<gene>
    <name evidence="1" type="primary">mtnA</name>
    <name type="ordered locus">LIC_11175</name>
</gene>
<evidence type="ECO:0000255" key="1">
    <source>
        <dbReference type="HAMAP-Rule" id="MF_01678"/>
    </source>
</evidence>
<evidence type="ECO:0000305" key="2"/>
<organism>
    <name type="scientific">Leptospira interrogans serogroup Icterohaemorrhagiae serovar copenhageni (strain Fiocruz L1-130)</name>
    <dbReference type="NCBI Taxonomy" id="267671"/>
    <lineage>
        <taxon>Bacteria</taxon>
        <taxon>Pseudomonadati</taxon>
        <taxon>Spirochaetota</taxon>
        <taxon>Spirochaetia</taxon>
        <taxon>Leptospirales</taxon>
        <taxon>Leptospiraceae</taxon>
        <taxon>Leptospira</taxon>
    </lineage>
</organism>
<keyword id="KW-0028">Amino-acid biosynthesis</keyword>
<keyword id="KW-0413">Isomerase</keyword>
<keyword id="KW-0486">Methionine biosynthesis</keyword>
<accession>Q72T46</accession>
<name>MTNA_LEPIC</name>
<comment type="function">
    <text evidence="1">Catalyzes the interconversion of methylthioribose-1-phosphate (MTR-1-P) into methylthioribulose-1-phosphate (MTRu-1-P).</text>
</comment>
<comment type="catalytic activity">
    <reaction evidence="1">
        <text>5-(methylsulfanyl)-alpha-D-ribose 1-phosphate = 5-(methylsulfanyl)-D-ribulose 1-phosphate</text>
        <dbReference type="Rhea" id="RHEA:19989"/>
        <dbReference type="ChEBI" id="CHEBI:58533"/>
        <dbReference type="ChEBI" id="CHEBI:58548"/>
        <dbReference type="EC" id="5.3.1.23"/>
    </reaction>
</comment>
<comment type="pathway">
    <text evidence="1">Amino-acid biosynthesis; L-methionine biosynthesis via salvage pathway; L-methionine from S-methyl-5-thio-alpha-D-ribose 1-phosphate: step 1/6.</text>
</comment>
<comment type="similarity">
    <text evidence="2">Belongs to the eIF-2B alpha/beta/delta subunits family. MtnA subfamily.</text>
</comment>
<protein>
    <recommendedName>
        <fullName evidence="1">Methylthioribose-1-phosphate isomerase</fullName>
        <shortName evidence="1">M1Pi</shortName>
        <shortName evidence="1">MTR-1-P isomerase</shortName>
        <ecNumber evidence="1">5.3.1.23</ecNumber>
    </recommendedName>
    <alternativeName>
        <fullName evidence="1">S-methyl-5-thioribose-1-phosphate isomerase</fullName>
    </alternativeName>
</protein>
<feature type="chain" id="PRO_0000156095" description="Methylthioribose-1-phosphate isomerase">
    <location>
        <begin position="1"/>
        <end position="364"/>
    </location>
</feature>
<feature type="active site" description="Proton donor" evidence="1">
    <location>
        <position position="242"/>
    </location>
</feature>
<feature type="binding site" evidence="1">
    <location>
        <begin position="49"/>
        <end position="51"/>
    </location>
    <ligand>
        <name>substrate</name>
    </ligand>
</feature>
<feature type="binding site" evidence="1">
    <location>
        <position position="89"/>
    </location>
    <ligand>
        <name>substrate</name>
    </ligand>
</feature>
<feature type="binding site" evidence="1">
    <location>
        <position position="201"/>
    </location>
    <ligand>
        <name>substrate</name>
    </ligand>
</feature>
<feature type="binding site" evidence="1">
    <location>
        <begin position="252"/>
        <end position="253"/>
    </location>
    <ligand>
        <name>substrate</name>
    </ligand>
</feature>
<feature type="site" description="Transition state stabilizer" evidence="1">
    <location>
        <position position="162"/>
    </location>
</feature>
<proteinExistence type="inferred from homology"/>